<gene>
    <name evidence="1" type="primary">thiM2</name>
    <name type="ordered locus">SPP_0735</name>
</gene>
<proteinExistence type="inferred from homology"/>
<comment type="function">
    <text evidence="1">Catalyzes the phosphorylation of the hydroxyl group of 4-methyl-5-beta-hydroxyethylthiazole (THZ).</text>
</comment>
<comment type="catalytic activity">
    <reaction evidence="1">
        <text>5-(2-hydroxyethyl)-4-methylthiazole + ATP = 4-methyl-5-(2-phosphooxyethyl)-thiazole + ADP + H(+)</text>
        <dbReference type="Rhea" id="RHEA:24212"/>
        <dbReference type="ChEBI" id="CHEBI:15378"/>
        <dbReference type="ChEBI" id="CHEBI:17957"/>
        <dbReference type="ChEBI" id="CHEBI:30616"/>
        <dbReference type="ChEBI" id="CHEBI:58296"/>
        <dbReference type="ChEBI" id="CHEBI:456216"/>
        <dbReference type="EC" id="2.7.1.50"/>
    </reaction>
</comment>
<comment type="cofactor">
    <cofactor evidence="1">
        <name>Mg(2+)</name>
        <dbReference type="ChEBI" id="CHEBI:18420"/>
    </cofactor>
</comment>
<comment type="pathway">
    <text evidence="1">Cofactor biosynthesis; thiamine diphosphate biosynthesis; 4-methyl-5-(2-phosphoethyl)-thiazole from 5-(2-hydroxyethyl)-4-methylthiazole: step 1/1.</text>
</comment>
<comment type="similarity">
    <text evidence="1">Belongs to the Thz kinase family.</text>
</comment>
<sequence length="267" mass="29104">MQALTNPFPIGSSSLIHCMTNEISCEMLANGILALGCKPVMADDPREVLDFTKQSQALFINLGHLSAEKEKAIRMAASYANQSSLPMVVDAVGVTTSSIRKSLVKDLLDYRPTVLKGNMSEIRSLVGLKHHGVGVDASAKDQETEDLLQVLKDWCQTYPGMSFLVTGPKDLIVSENQVAVLENGCTELDWITGTGDLVGALTAVFLSQGKTGFEASCLAVSYLNIAAEKIVVQGMGLEEFRYQVLNQLSLLRRDENWLDTIKGEVYE</sequence>
<name>THIM2_STRZP</name>
<feature type="chain" id="PRO_0000383904" description="Hydroxyethylthiazole kinase 2">
    <location>
        <begin position="1"/>
        <end position="267"/>
    </location>
</feature>
<feature type="binding site" evidence="1">
    <location>
        <position position="41"/>
    </location>
    <ligand>
        <name>substrate</name>
    </ligand>
</feature>
<feature type="binding site" evidence="1">
    <location>
        <position position="116"/>
    </location>
    <ligand>
        <name>ATP</name>
        <dbReference type="ChEBI" id="CHEBI:30616"/>
    </ligand>
</feature>
<feature type="binding site" evidence="1">
    <location>
        <position position="166"/>
    </location>
    <ligand>
        <name>ATP</name>
        <dbReference type="ChEBI" id="CHEBI:30616"/>
    </ligand>
</feature>
<feature type="binding site" evidence="1">
    <location>
        <position position="193"/>
    </location>
    <ligand>
        <name>substrate</name>
    </ligand>
</feature>
<accession>C1CJH5</accession>
<protein>
    <recommendedName>
        <fullName evidence="1">Hydroxyethylthiazole kinase 2</fullName>
        <ecNumber evidence="1">2.7.1.50</ecNumber>
    </recommendedName>
    <alternativeName>
        <fullName evidence="1">4-methyl-5-beta-hydroxyethylthiazole kinase 2</fullName>
        <shortName evidence="1">TH kinase 2</shortName>
        <shortName evidence="1">Thz kinase 2</shortName>
    </alternativeName>
</protein>
<keyword id="KW-0067">ATP-binding</keyword>
<keyword id="KW-0418">Kinase</keyword>
<keyword id="KW-0460">Magnesium</keyword>
<keyword id="KW-0479">Metal-binding</keyword>
<keyword id="KW-0547">Nucleotide-binding</keyword>
<keyword id="KW-0784">Thiamine biosynthesis</keyword>
<keyword id="KW-0808">Transferase</keyword>
<reference key="1">
    <citation type="journal article" date="2010" name="Genome Biol.">
        <title>Structure and dynamics of the pan-genome of Streptococcus pneumoniae and closely related species.</title>
        <authorList>
            <person name="Donati C."/>
            <person name="Hiller N.L."/>
            <person name="Tettelin H."/>
            <person name="Muzzi A."/>
            <person name="Croucher N.J."/>
            <person name="Angiuoli S.V."/>
            <person name="Oggioni M."/>
            <person name="Dunning Hotopp J.C."/>
            <person name="Hu F.Z."/>
            <person name="Riley D.R."/>
            <person name="Covacci A."/>
            <person name="Mitchell T.J."/>
            <person name="Bentley S.D."/>
            <person name="Kilian M."/>
            <person name="Ehrlich G.D."/>
            <person name="Rappuoli R."/>
            <person name="Moxon E.R."/>
            <person name="Masignani V."/>
        </authorList>
    </citation>
    <scope>NUCLEOTIDE SEQUENCE [LARGE SCALE GENOMIC DNA]</scope>
    <source>
        <strain>P1031</strain>
    </source>
</reference>
<evidence type="ECO:0000255" key="1">
    <source>
        <dbReference type="HAMAP-Rule" id="MF_00228"/>
    </source>
</evidence>
<dbReference type="EC" id="2.7.1.50" evidence="1"/>
<dbReference type="EMBL" id="CP000920">
    <property type="protein sequence ID" value="ACO20450.1"/>
    <property type="molecule type" value="Genomic_DNA"/>
</dbReference>
<dbReference type="RefSeq" id="WP_001148665.1">
    <property type="nucleotide sequence ID" value="NC_012467.1"/>
</dbReference>
<dbReference type="SMR" id="C1CJH5"/>
<dbReference type="KEGG" id="spp:SPP_0735"/>
<dbReference type="HOGENOM" id="CLU_019943_0_0_9"/>
<dbReference type="UniPathway" id="UPA00060">
    <property type="reaction ID" value="UER00139"/>
</dbReference>
<dbReference type="GO" id="GO:0005524">
    <property type="term" value="F:ATP binding"/>
    <property type="evidence" value="ECO:0007669"/>
    <property type="project" value="UniProtKB-UniRule"/>
</dbReference>
<dbReference type="GO" id="GO:0004417">
    <property type="term" value="F:hydroxyethylthiazole kinase activity"/>
    <property type="evidence" value="ECO:0007669"/>
    <property type="project" value="UniProtKB-UniRule"/>
</dbReference>
<dbReference type="GO" id="GO:0000287">
    <property type="term" value="F:magnesium ion binding"/>
    <property type="evidence" value="ECO:0007669"/>
    <property type="project" value="UniProtKB-UniRule"/>
</dbReference>
<dbReference type="GO" id="GO:0009228">
    <property type="term" value="P:thiamine biosynthetic process"/>
    <property type="evidence" value="ECO:0007669"/>
    <property type="project" value="UniProtKB-KW"/>
</dbReference>
<dbReference type="GO" id="GO:0009229">
    <property type="term" value="P:thiamine diphosphate biosynthetic process"/>
    <property type="evidence" value="ECO:0007669"/>
    <property type="project" value="UniProtKB-UniRule"/>
</dbReference>
<dbReference type="CDD" id="cd01170">
    <property type="entry name" value="THZ_kinase"/>
    <property type="match status" value="1"/>
</dbReference>
<dbReference type="Gene3D" id="3.40.1190.20">
    <property type="match status" value="1"/>
</dbReference>
<dbReference type="HAMAP" id="MF_00228">
    <property type="entry name" value="Thz_kinase"/>
    <property type="match status" value="1"/>
</dbReference>
<dbReference type="InterPro" id="IPR000417">
    <property type="entry name" value="Hyethyz_kinase"/>
</dbReference>
<dbReference type="InterPro" id="IPR029056">
    <property type="entry name" value="Ribokinase-like"/>
</dbReference>
<dbReference type="Pfam" id="PF02110">
    <property type="entry name" value="HK"/>
    <property type="match status" value="1"/>
</dbReference>
<dbReference type="PIRSF" id="PIRSF000513">
    <property type="entry name" value="Thz_kinase"/>
    <property type="match status" value="1"/>
</dbReference>
<dbReference type="PRINTS" id="PR01099">
    <property type="entry name" value="HYETHTZKNASE"/>
</dbReference>
<dbReference type="SUPFAM" id="SSF53613">
    <property type="entry name" value="Ribokinase-like"/>
    <property type="match status" value="1"/>
</dbReference>
<organism>
    <name type="scientific">Streptococcus pneumoniae (strain P1031)</name>
    <dbReference type="NCBI Taxonomy" id="488223"/>
    <lineage>
        <taxon>Bacteria</taxon>
        <taxon>Bacillati</taxon>
        <taxon>Bacillota</taxon>
        <taxon>Bacilli</taxon>
        <taxon>Lactobacillales</taxon>
        <taxon>Streptococcaceae</taxon>
        <taxon>Streptococcus</taxon>
    </lineage>
</organism>